<protein>
    <recommendedName>
        <fullName evidence="2">Urease subunit beta</fullName>
        <ecNumber evidence="2">3.5.1.5</ecNumber>
    </recommendedName>
    <alternativeName>
        <fullName evidence="2">Urea amidohydrolase subunit beta</fullName>
    </alternativeName>
</protein>
<evidence type="ECO:0000250" key="1"/>
<evidence type="ECO:0000255" key="2">
    <source>
        <dbReference type="HAMAP-Rule" id="MF_01954"/>
    </source>
</evidence>
<sequence>MSGSSNQFTPGKLVPGAINFAEGEIVMNEGREAKVISIKNTGDRPIQVGSHFHLFETNSALVFFDEKGNEDKERKVAYGRRFDIPSGTAIRFEPGDKKEVSVIDLVGTREVWGVNGLVNGKLKK</sequence>
<accession>B5ZBT0</accession>
<accession>P17273</accession>
<accession>Q9WVU8</accession>
<comment type="catalytic activity">
    <reaction evidence="2">
        <text>urea + 2 H2O + H(+) = hydrogencarbonate + 2 NH4(+)</text>
        <dbReference type="Rhea" id="RHEA:20557"/>
        <dbReference type="ChEBI" id="CHEBI:15377"/>
        <dbReference type="ChEBI" id="CHEBI:15378"/>
        <dbReference type="ChEBI" id="CHEBI:16199"/>
        <dbReference type="ChEBI" id="CHEBI:17544"/>
        <dbReference type="ChEBI" id="CHEBI:28938"/>
        <dbReference type="EC" id="3.5.1.5"/>
    </reaction>
</comment>
<comment type="pathway">
    <text evidence="2">Nitrogen metabolism; urea degradation; CO(2) and NH(3) from urea (urease route): step 1/1.</text>
</comment>
<comment type="subunit">
    <text evidence="2">Heterotrimer of UreA (gamma), UreB (beta) and UreC (alpha) subunits. Three heterotrimers associate to form the active enzyme.</text>
</comment>
<comment type="subcellular location">
    <subcellularLocation>
        <location evidence="2">Cytoplasm</location>
    </subcellularLocation>
</comment>
<comment type="similarity">
    <text evidence="2">Belongs to the urease beta subunit family.</text>
</comment>
<dbReference type="EC" id="3.5.1.5" evidence="2"/>
<dbReference type="EMBL" id="AF085726">
    <property type="protein sequence ID" value="AAD28123.1"/>
    <property type="molecule type" value="Genomic_DNA"/>
</dbReference>
<dbReference type="EMBL" id="CP001184">
    <property type="protein sequence ID" value="ACI59941.1"/>
    <property type="molecule type" value="Genomic_DNA"/>
</dbReference>
<dbReference type="RefSeq" id="WP_004025930.1">
    <property type="nucleotide sequence ID" value="NC_011374.1"/>
</dbReference>
<dbReference type="SMR" id="B5ZBT0"/>
<dbReference type="STRING" id="565575.UUR10_0478"/>
<dbReference type="GeneID" id="93848950"/>
<dbReference type="KEGG" id="uue:UUR10_0478"/>
<dbReference type="eggNOG" id="COG0832">
    <property type="taxonomic scope" value="Bacteria"/>
</dbReference>
<dbReference type="HOGENOM" id="CLU_129707_1_1_14"/>
<dbReference type="OrthoDB" id="9797217at2"/>
<dbReference type="UniPathway" id="UPA00258">
    <property type="reaction ID" value="UER00370"/>
</dbReference>
<dbReference type="Proteomes" id="UP000002018">
    <property type="component" value="Chromosome"/>
</dbReference>
<dbReference type="GO" id="GO:0035550">
    <property type="term" value="C:urease complex"/>
    <property type="evidence" value="ECO:0007669"/>
    <property type="project" value="InterPro"/>
</dbReference>
<dbReference type="GO" id="GO:0009039">
    <property type="term" value="F:urease activity"/>
    <property type="evidence" value="ECO:0007669"/>
    <property type="project" value="UniProtKB-UniRule"/>
</dbReference>
<dbReference type="GO" id="GO:0043419">
    <property type="term" value="P:urea catabolic process"/>
    <property type="evidence" value="ECO:0007669"/>
    <property type="project" value="UniProtKB-UniRule"/>
</dbReference>
<dbReference type="CDD" id="cd00407">
    <property type="entry name" value="Urease_beta"/>
    <property type="match status" value="1"/>
</dbReference>
<dbReference type="Gene3D" id="2.10.150.10">
    <property type="entry name" value="Urease, beta subunit"/>
    <property type="match status" value="1"/>
</dbReference>
<dbReference type="HAMAP" id="MF_01954">
    <property type="entry name" value="Urease_beta"/>
    <property type="match status" value="1"/>
</dbReference>
<dbReference type="InterPro" id="IPR002019">
    <property type="entry name" value="Urease_beta-like"/>
</dbReference>
<dbReference type="InterPro" id="IPR036461">
    <property type="entry name" value="Urease_betasu_sf"/>
</dbReference>
<dbReference type="InterPro" id="IPR050069">
    <property type="entry name" value="Urease_subunit"/>
</dbReference>
<dbReference type="NCBIfam" id="TIGR00192">
    <property type="entry name" value="urease_beta"/>
    <property type="match status" value="1"/>
</dbReference>
<dbReference type="PANTHER" id="PTHR33569">
    <property type="entry name" value="UREASE"/>
    <property type="match status" value="1"/>
</dbReference>
<dbReference type="PANTHER" id="PTHR33569:SF1">
    <property type="entry name" value="UREASE"/>
    <property type="match status" value="1"/>
</dbReference>
<dbReference type="Pfam" id="PF00699">
    <property type="entry name" value="Urease_beta"/>
    <property type="match status" value="1"/>
</dbReference>
<dbReference type="SUPFAM" id="SSF51278">
    <property type="entry name" value="Urease, beta-subunit"/>
    <property type="match status" value="1"/>
</dbReference>
<name>URE2_UREU1</name>
<proteinExistence type="inferred from homology"/>
<gene>
    <name evidence="2" type="primary">ureB</name>
    <name type="ordered locus">UUR10_0478</name>
</gene>
<keyword id="KW-0963">Cytoplasm</keyword>
<keyword id="KW-0378">Hydrolase</keyword>
<feature type="initiator methionine" description="Removed" evidence="1">
    <location>
        <position position="1"/>
    </location>
</feature>
<feature type="chain" id="PRO_1000188946" description="Urease subunit beta">
    <location>
        <begin position="2"/>
        <end position="124"/>
    </location>
</feature>
<organism>
    <name type="scientific">Ureaplasma urealyticum serovar 10 (strain ATCC 33699 / Western)</name>
    <dbReference type="NCBI Taxonomy" id="565575"/>
    <lineage>
        <taxon>Bacteria</taxon>
        <taxon>Bacillati</taxon>
        <taxon>Mycoplasmatota</taxon>
        <taxon>Mycoplasmoidales</taxon>
        <taxon>Mycoplasmoidaceae</taxon>
        <taxon>Ureaplasma</taxon>
    </lineage>
</organism>
<reference key="1">
    <citation type="journal article" date="1999" name="Int. J. Syst. Bacteriol.">
        <title>Phylogenetic analysis of Ureaplasma urealyticum -- support for the establishment of a new species, Ureaplasma parvum.</title>
        <authorList>
            <person name="Kong F."/>
            <person name="James G."/>
            <person name="Ma Z."/>
            <person name="Gordon S."/>
            <person name="Wang B."/>
            <person name="Gilbert G.L."/>
        </authorList>
    </citation>
    <scope>NUCLEOTIDE SEQUENCE [GENOMIC DNA]</scope>
</reference>
<reference key="2">
    <citation type="submission" date="2008-10" db="EMBL/GenBank/DDBJ databases">
        <title>Genome sequence of Ureaplasma urealyticum serovar 10 ATCC-33699.</title>
        <authorList>
            <person name="Shrivastava S."/>
            <person name="Methe B.A."/>
            <person name="Glass J."/>
            <person name="White K."/>
            <person name="Duffy L.B."/>
        </authorList>
    </citation>
    <scope>NUCLEOTIDE SEQUENCE [LARGE SCALE GENOMIC DNA]</scope>
    <source>
        <strain>ATCC 33699 / Western</strain>
    </source>
</reference>